<accession>A4QKE5</accession>
<geneLocation type="chloroplast"/>
<comment type="function">
    <text evidence="1">Protein S19 forms a complex with S13 that binds strongly to the 16S ribosomal RNA.</text>
</comment>
<comment type="subcellular location">
    <subcellularLocation>
        <location>Plastid</location>
        <location>Chloroplast</location>
    </subcellularLocation>
</comment>
<comment type="similarity">
    <text evidence="1">Belongs to the universal ribosomal protein uS19 family.</text>
</comment>
<evidence type="ECO:0000255" key="1">
    <source>
        <dbReference type="HAMAP-Rule" id="MF_00531"/>
    </source>
</evidence>
<evidence type="ECO:0000305" key="2"/>
<reference key="1">
    <citation type="submission" date="2007-03" db="EMBL/GenBank/DDBJ databases">
        <title>Sequencing analysis of Barbarea verna chloroplast DNA.</title>
        <authorList>
            <person name="Hosouchi T."/>
            <person name="Tsuruoka H."/>
            <person name="Kotani H."/>
        </authorList>
    </citation>
    <scope>NUCLEOTIDE SEQUENCE [LARGE SCALE GENOMIC DNA]</scope>
</reference>
<gene>
    <name evidence="1" type="primary">rps19</name>
</gene>
<feature type="chain" id="PRO_0000354335" description="Small ribosomal subunit protein uS19c">
    <location>
        <begin position="1"/>
        <end position="92"/>
    </location>
</feature>
<dbReference type="EMBL" id="AP009370">
    <property type="protein sequence ID" value="BAF50150.1"/>
    <property type="molecule type" value="Genomic_DNA"/>
</dbReference>
<dbReference type="RefSeq" id="YP_001123326.1">
    <property type="nucleotide sequence ID" value="NC_009269.1"/>
</dbReference>
<dbReference type="SMR" id="A4QKE5"/>
<dbReference type="GeneID" id="4961883"/>
<dbReference type="GO" id="GO:0009507">
    <property type="term" value="C:chloroplast"/>
    <property type="evidence" value="ECO:0007669"/>
    <property type="project" value="UniProtKB-SubCell"/>
</dbReference>
<dbReference type="GO" id="GO:0005763">
    <property type="term" value="C:mitochondrial small ribosomal subunit"/>
    <property type="evidence" value="ECO:0007669"/>
    <property type="project" value="TreeGrafter"/>
</dbReference>
<dbReference type="GO" id="GO:0019843">
    <property type="term" value="F:rRNA binding"/>
    <property type="evidence" value="ECO:0007669"/>
    <property type="project" value="UniProtKB-UniRule"/>
</dbReference>
<dbReference type="GO" id="GO:0003735">
    <property type="term" value="F:structural constituent of ribosome"/>
    <property type="evidence" value="ECO:0007669"/>
    <property type="project" value="InterPro"/>
</dbReference>
<dbReference type="GO" id="GO:0000028">
    <property type="term" value="P:ribosomal small subunit assembly"/>
    <property type="evidence" value="ECO:0007669"/>
    <property type="project" value="TreeGrafter"/>
</dbReference>
<dbReference type="GO" id="GO:0006412">
    <property type="term" value="P:translation"/>
    <property type="evidence" value="ECO:0007669"/>
    <property type="project" value="UniProtKB-UniRule"/>
</dbReference>
<dbReference type="FunFam" id="3.30.860.10:FF:000001">
    <property type="entry name" value="30S ribosomal protein S19"/>
    <property type="match status" value="1"/>
</dbReference>
<dbReference type="Gene3D" id="3.30.860.10">
    <property type="entry name" value="30s Ribosomal Protein S19, Chain A"/>
    <property type="match status" value="1"/>
</dbReference>
<dbReference type="HAMAP" id="MF_00531">
    <property type="entry name" value="Ribosomal_uS19"/>
    <property type="match status" value="1"/>
</dbReference>
<dbReference type="InterPro" id="IPR002222">
    <property type="entry name" value="Ribosomal_uS19"/>
</dbReference>
<dbReference type="InterPro" id="IPR005732">
    <property type="entry name" value="Ribosomal_uS19_bac-type"/>
</dbReference>
<dbReference type="InterPro" id="IPR020934">
    <property type="entry name" value="Ribosomal_uS19_CS"/>
</dbReference>
<dbReference type="InterPro" id="IPR023575">
    <property type="entry name" value="Ribosomal_uS19_SF"/>
</dbReference>
<dbReference type="NCBIfam" id="TIGR01050">
    <property type="entry name" value="rpsS_bact"/>
    <property type="match status" value="1"/>
</dbReference>
<dbReference type="PANTHER" id="PTHR11880">
    <property type="entry name" value="RIBOSOMAL PROTEIN S19P FAMILY MEMBER"/>
    <property type="match status" value="1"/>
</dbReference>
<dbReference type="PANTHER" id="PTHR11880:SF8">
    <property type="entry name" value="SMALL RIBOSOMAL SUBUNIT PROTEIN US19M"/>
    <property type="match status" value="1"/>
</dbReference>
<dbReference type="Pfam" id="PF00203">
    <property type="entry name" value="Ribosomal_S19"/>
    <property type="match status" value="1"/>
</dbReference>
<dbReference type="PIRSF" id="PIRSF002144">
    <property type="entry name" value="Ribosomal_S19"/>
    <property type="match status" value="1"/>
</dbReference>
<dbReference type="PRINTS" id="PR00975">
    <property type="entry name" value="RIBOSOMALS19"/>
</dbReference>
<dbReference type="SUPFAM" id="SSF54570">
    <property type="entry name" value="Ribosomal protein S19"/>
    <property type="match status" value="1"/>
</dbReference>
<dbReference type="PROSITE" id="PS00323">
    <property type="entry name" value="RIBOSOMAL_S19"/>
    <property type="match status" value="1"/>
</dbReference>
<keyword id="KW-0150">Chloroplast</keyword>
<keyword id="KW-0934">Plastid</keyword>
<keyword id="KW-0687">Ribonucleoprotein</keyword>
<keyword id="KW-0689">Ribosomal protein</keyword>
<keyword id="KW-0694">RNA-binding</keyword>
<keyword id="KW-0699">rRNA-binding</keyword>
<organism>
    <name type="scientific">Barbarea verna</name>
    <name type="common">Land cress</name>
    <name type="synonym">Erysimum vernum</name>
    <dbReference type="NCBI Taxonomy" id="50458"/>
    <lineage>
        <taxon>Eukaryota</taxon>
        <taxon>Viridiplantae</taxon>
        <taxon>Streptophyta</taxon>
        <taxon>Embryophyta</taxon>
        <taxon>Tracheophyta</taxon>
        <taxon>Spermatophyta</taxon>
        <taxon>Magnoliopsida</taxon>
        <taxon>eudicotyledons</taxon>
        <taxon>Gunneridae</taxon>
        <taxon>Pentapetalae</taxon>
        <taxon>rosids</taxon>
        <taxon>malvids</taxon>
        <taxon>Brassicales</taxon>
        <taxon>Brassicaceae</taxon>
        <taxon>Cardamineae</taxon>
        <taxon>Barbarea</taxon>
    </lineage>
</organism>
<protein>
    <recommendedName>
        <fullName evidence="1">Small ribosomal subunit protein uS19c</fullName>
    </recommendedName>
    <alternativeName>
        <fullName evidence="2">30S ribosomal protein S19, chloroplastic</fullName>
    </alternativeName>
</protein>
<sequence>MTRSLKKNPFVAKHLLRKIEKLNTKAEKEIIITWSRASTIIPTMIGHTIAIHNGREHLPVYIIDLMVGHKLGEFSPTINFRGHAKNDNRSRR</sequence>
<name>RR19_BARVE</name>
<proteinExistence type="inferred from homology"/>